<sequence>MAASSTATRLSPPRLHAPTTPSPHLPLRRSRFSPLRAAKLEAVLTIGTHLIPHPRKAETGGEDAFFVNGDDGGVFAVADGVSGWAEKDVNPALFSRELMAHTSTFLKDEEVNHDPQLLLMKAHAATTSVGSATVIIAMLEKTGILKIASVGDCGLKVIRKGQVMFSTCPQEHYFDCPYQLSSEAIGQTYLDALVCTVNLMEGDMIVSGSDGFFDNIFDQEIVSVISESPGVDEAAKALAELARKHSVDVTFDSPYSMEARSRGFDVPSWKKFIGGKLIGGKMDDITVIVAQVKAVMIPDDEGVDEEKGQGDEQGSAVAVASSEQKEDSITT</sequence>
<reference key="1">
    <citation type="journal article" date="2002" name="Nature">
        <title>The genome sequence and structure of rice chromosome 1.</title>
        <authorList>
            <person name="Sasaki T."/>
            <person name="Matsumoto T."/>
            <person name="Yamamoto K."/>
            <person name="Sakata K."/>
            <person name="Baba T."/>
            <person name="Katayose Y."/>
            <person name="Wu J."/>
            <person name="Niimura Y."/>
            <person name="Cheng Z."/>
            <person name="Nagamura Y."/>
            <person name="Antonio B.A."/>
            <person name="Kanamori H."/>
            <person name="Hosokawa S."/>
            <person name="Masukawa M."/>
            <person name="Arikawa K."/>
            <person name="Chiden Y."/>
            <person name="Hayashi M."/>
            <person name="Okamoto M."/>
            <person name="Ando T."/>
            <person name="Aoki H."/>
            <person name="Arita K."/>
            <person name="Hamada M."/>
            <person name="Harada C."/>
            <person name="Hijishita S."/>
            <person name="Honda M."/>
            <person name="Ichikawa Y."/>
            <person name="Idonuma A."/>
            <person name="Iijima M."/>
            <person name="Ikeda M."/>
            <person name="Ikeno M."/>
            <person name="Ito S."/>
            <person name="Ito T."/>
            <person name="Ito Y."/>
            <person name="Ito Y."/>
            <person name="Iwabuchi A."/>
            <person name="Kamiya K."/>
            <person name="Karasawa W."/>
            <person name="Katagiri S."/>
            <person name="Kikuta A."/>
            <person name="Kobayashi N."/>
            <person name="Kono I."/>
            <person name="Machita K."/>
            <person name="Maehara T."/>
            <person name="Mizuno H."/>
            <person name="Mizubayashi T."/>
            <person name="Mukai Y."/>
            <person name="Nagasaki H."/>
            <person name="Nakashima M."/>
            <person name="Nakama Y."/>
            <person name="Nakamichi Y."/>
            <person name="Nakamura M."/>
            <person name="Namiki N."/>
            <person name="Negishi M."/>
            <person name="Ohta I."/>
            <person name="Ono N."/>
            <person name="Saji S."/>
            <person name="Sakai K."/>
            <person name="Shibata M."/>
            <person name="Shimokawa T."/>
            <person name="Shomura A."/>
            <person name="Song J."/>
            <person name="Takazaki Y."/>
            <person name="Terasawa K."/>
            <person name="Tsuji K."/>
            <person name="Waki K."/>
            <person name="Yamagata H."/>
            <person name="Yamane H."/>
            <person name="Yoshiki S."/>
            <person name="Yoshihara R."/>
            <person name="Yukawa K."/>
            <person name="Zhong H."/>
            <person name="Iwama H."/>
            <person name="Endo T."/>
            <person name="Ito H."/>
            <person name="Hahn J.H."/>
            <person name="Kim H.-I."/>
            <person name="Eun M.-Y."/>
            <person name="Yano M."/>
            <person name="Jiang J."/>
            <person name="Gojobori T."/>
        </authorList>
    </citation>
    <scope>NUCLEOTIDE SEQUENCE [LARGE SCALE GENOMIC DNA]</scope>
    <source>
        <strain>cv. Nipponbare</strain>
    </source>
</reference>
<reference key="2">
    <citation type="journal article" date="2005" name="Nature">
        <title>The map-based sequence of the rice genome.</title>
        <authorList>
            <consortium name="International rice genome sequencing project (IRGSP)"/>
        </authorList>
    </citation>
    <scope>NUCLEOTIDE SEQUENCE [LARGE SCALE GENOMIC DNA]</scope>
    <source>
        <strain>cv. Nipponbare</strain>
    </source>
</reference>
<reference key="3">
    <citation type="journal article" date="2008" name="Nucleic Acids Res.">
        <title>The rice annotation project database (RAP-DB): 2008 update.</title>
        <authorList>
            <consortium name="The rice annotation project (RAP)"/>
        </authorList>
    </citation>
    <scope>GENOME REANNOTATION</scope>
    <source>
        <strain>cv. Nipponbare</strain>
    </source>
</reference>
<reference key="4">
    <citation type="journal article" date="2013" name="Rice">
        <title>Improvement of the Oryza sativa Nipponbare reference genome using next generation sequence and optical map data.</title>
        <authorList>
            <person name="Kawahara Y."/>
            <person name="de la Bastide M."/>
            <person name="Hamilton J.P."/>
            <person name="Kanamori H."/>
            <person name="McCombie W.R."/>
            <person name="Ouyang S."/>
            <person name="Schwartz D.C."/>
            <person name="Tanaka T."/>
            <person name="Wu J."/>
            <person name="Zhou S."/>
            <person name="Childs K.L."/>
            <person name="Davidson R.M."/>
            <person name="Lin H."/>
            <person name="Quesada-Ocampo L."/>
            <person name="Vaillancourt B."/>
            <person name="Sakai H."/>
            <person name="Lee S.S."/>
            <person name="Kim J."/>
            <person name="Numa H."/>
            <person name="Itoh T."/>
            <person name="Buell C.R."/>
            <person name="Matsumoto T."/>
        </authorList>
    </citation>
    <scope>GENOME REANNOTATION</scope>
    <source>
        <strain>cv. Nipponbare</strain>
    </source>
</reference>
<reference key="5">
    <citation type="journal article" date="2005" name="PLoS Biol.">
        <title>The genomes of Oryza sativa: a history of duplications.</title>
        <authorList>
            <person name="Yu J."/>
            <person name="Wang J."/>
            <person name="Lin W."/>
            <person name="Li S."/>
            <person name="Li H."/>
            <person name="Zhou J."/>
            <person name="Ni P."/>
            <person name="Dong W."/>
            <person name="Hu S."/>
            <person name="Zeng C."/>
            <person name="Zhang J."/>
            <person name="Zhang Y."/>
            <person name="Li R."/>
            <person name="Xu Z."/>
            <person name="Li S."/>
            <person name="Li X."/>
            <person name="Zheng H."/>
            <person name="Cong L."/>
            <person name="Lin L."/>
            <person name="Yin J."/>
            <person name="Geng J."/>
            <person name="Li G."/>
            <person name="Shi J."/>
            <person name="Liu J."/>
            <person name="Lv H."/>
            <person name="Li J."/>
            <person name="Wang J."/>
            <person name="Deng Y."/>
            <person name="Ran L."/>
            <person name="Shi X."/>
            <person name="Wang X."/>
            <person name="Wu Q."/>
            <person name="Li C."/>
            <person name="Ren X."/>
            <person name="Wang J."/>
            <person name="Wang X."/>
            <person name="Li D."/>
            <person name="Liu D."/>
            <person name="Zhang X."/>
            <person name="Ji Z."/>
            <person name="Zhao W."/>
            <person name="Sun Y."/>
            <person name="Zhang Z."/>
            <person name="Bao J."/>
            <person name="Han Y."/>
            <person name="Dong L."/>
            <person name="Ji J."/>
            <person name="Chen P."/>
            <person name="Wu S."/>
            <person name="Liu J."/>
            <person name="Xiao Y."/>
            <person name="Bu D."/>
            <person name="Tan J."/>
            <person name="Yang L."/>
            <person name="Ye C."/>
            <person name="Zhang J."/>
            <person name="Xu J."/>
            <person name="Zhou Y."/>
            <person name="Yu Y."/>
            <person name="Zhang B."/>
            <person name="Zhuang S."/>
            <person name="Wei H."/>
            <person name="Liu B."/>
            <person name="Lei M."/>
            <person name="Yu H."/>
            <person name="Li Y."/>
            <person name="Xu H."/>
            <person name="Wei S."/>
            <person name="He X."/>
            <person name="Fang L."/>
            <person name="Zhang Z."/>
            <person name="Zhang Y."/>
            <person name="Huang X."/>
            <person name="Su Z."/>
            <person name="Tong W."/>
            <person name="Li J."/>
            <person name="Tong Z."/>
            <person name="Li S."/>
            <person name="Ye J."/>
            <person name="Wang L."/>
            <person name="Fang L."/>
            <person name="Lei T."/>
            <person name="Chen C.-S."/>
            <person name="Chen H.-C."/>
            <person name="Xu Z."/>
            <person name="Li H."/>
            <person name="Huang H."/>
            <person name="Zhang F."/>
            <person name="Xu H."/>
            <person name="Li N."/>
            <person name="Zhao C."/>
            <person name="Li S."/>
            <person name="Dong L."/>
            <person name="Huang Y."/>
            <person name="Li L."/>
            <person name="Xi Y."/>
            <person name="Qi Q."/>
            <person name="Li W."/>
            <person name="Zhang B."/>
            <person name="Hu W."/>
            <person name="Zhang Y."/>
            <person name="Tian X."/>
            <person name="Jiao Y."/>
            <person name="Liang X."/>
            <person name="Jin J."/>
            <person name="Gao L."/>
            <person name="Zheng W."/>
            <person name="Hao B."/>
            <person name="Liu S.-M."/>
            <person name="Wang W."/>
            <person name="Yuan L."/>
            <person name="Cao M."/>
            <person name="McDermott J."/>
            <person name="Samudrala R."/>
            <person name="Wang J."/>
            <person name="Wong G.K.-S."/>
            <person name="Yang H."/>
        </authorList>
    </citation>
    <scope>NUCLEOTIDE SEQUENCE [LARGE SCALE GENOMIC DNA]</scope>
    <source>
        <strain>cv. Nipponbare</strain>
    </source>
</reference>
<reference key="6">
    <citation type="journal article" date="2003" name="Science">
        <title>Collection, mapping, and annotation of over 28,000 cDNA clones from japonica rice.</title>
        <authorList>
            <consortium name="The rice full-length cDNA consortium"/>
        </authorList>
    </citation>
    <scope>NUCLEOTIDE SEQUENCE [LARGE SCALE MRNA]</scope>
    <source>
        <strain>cv. Nipponbare</strain>
    </source>
</reference>
<reference key="7">
    <citation type="journal article" date="2008" name="BMC Genomics">
        <title>Genome-wide and expression analysis of protein phosphatase 2C in rice and Arabidopsis.</title>
        <authorList>
            <person name="Xue T."/>
            <person name="Wang D."/>
            <person name="Zhang S."/>
            <person name="Ehlting J."/>
            <person name="Ni F."/>
            <person name="Jacab S."/>
            <person name="Zheng C."/>
            <person name="Zhong Y."/>
        </authorList>
    </citation>
    <scope>GENE FAMILY</scope>
    <scope>NOMENCLATURE</scope>
</reference>
<keyword id="KW-0002">3D-structure</keyword>
<keyword id="KW-0378">Hydrolase</keyword>
<keyword id="KW-0460">Magnesium</keyword>
<keyword id="KW-0464">Manganese</keyword>
<keyword id="KW-0479">Metal-binding</keyword>
<keyword id="KW-0904">Protein phosphatase</keyword>
<keyword id="KW-1185">Reference proteome</keyword>
<organism>
    <name type="scientific">Oryza sativa subsp. japonica</name>
    <name type="common">Rice</name>
    <dbReference type="NCBI Taxonomy" id="39947"/>
    <lineage>
        <taxon>Eukaryota</taxon>
        <taxon>Viridiplantae</taxon>
        <taxon>Streptophyta</taxon>
        <taxon>Embryophyta</taxon>
        <taxon>Tracheophyta</taxon>
        <taxon>Spermatophyta</taxon>
        <taxon>Magnoliopsida</taxon>
        <taxon>Liliopsida</taxon>
        <taxon>Poales</taxon>
        <taxon>Poaceae</taxon>
        <taxon>BOP clade</taxon>
        <taxon>Oryzoideae</taxon>
        <taxon>Oryzeae</taxon>
        <taxon>Oryzinae</taxon>
        <taxon>Oryza</taxon>
        <taxon>Oryza sativa</taxon>
    </lineage>
</organism>
<evidence type="ECO:0000250" key="1"/>
<evidence type="ECO:0000255" key="2">
    <source>
        <dbReference type="PROSITE-ProRule" id="PRU01082"/>
    </source>
</evidence>
<evidence type="ECO:0000256" key="3">
    <source>
        <dbReference type="SAM" id="MobiDB-lite"/>
    </source>
</evidence>
<evidence type="ECO:0000305" key="4"/>
<evidence type="ECO:0007829" key="5">
    <source>
        <dbReference type="PDB" id="6AE9"/>
    </source>
</evidence>
<feature type="chain" id="PRO_0000363247" description="Probable protein phosphatase 2C 1">
    <location>
        <begin position="1"/>
        <end position="331"/>
    </location>
</feature>
<feature type="domain" description="PPM-type phosphatase" evidence="2">
    <location>
        <begin position="48"/>
        <end position="292"/>
    </location>
</feature>
<feature type="region of interest" description="Disordered" evidence="3">
    <location>
        <begin position="1"/>
        <end position="29"/>
    </location>
</feature>
<feature type="region of interest" description="Disordered" evidence="3">
    <location>
        <begin position="300"/>
        <end position="331"/>
    </location>
</feature>
<feature type="binding site" evidence="1">
    <location>
        <position position="79"/>
    </location>
    <ligand>
        <name>Mn(2+)</name>
        <dbReference type="ChEBI" id="CHEBI:29035"/>
        <label>1</label>
    </ligand>
</feature>
<feature type="binding site" evidence="1">
    <location>
        <position position="79"/>
    </location>
    <ligand>
        <name>Mn(2+)</name>
        <dbReference type="ChEBI" id="CHEBI:29035"/>
        <label>2</label>
    </ligand>
</feature>
<feature type="binding site" evidence="1">
    <location>
        <position position="80"/>
    </location>
    <ligand>
        <name>Mn(2+)</name>
        <dbReference type="ChEBI" id="CHEBI:29035"/>
        <label>1</label>
    </ligand>
</feature>
<feature type="binding site" evidence="1">
    <location>
        <position position="210"/>
    </location>
    <ligand>
        <name>Mn(2+)</name>
        <dbReference type="ChEBI" id="CHEBI:29035"/>
        <label>2</label>
    </ligand>
</feature>
<feature type="binding site" evidence="1">
    <location>
        <position position="283"/>
    </location>
    <ligand>
        <name>Mn(2+)</name>
        <dbReference type="ChEBI" id="CHEBI:29035"/>
        <label>2</label>
    </ligand>
</feature>
<feature type="strand" evidence="5">
    <location>
        <begin position="44"/>
        <end position="51"/>
    </location>
</feature>
<feature type="helix" evidence="5">
    <location>
        <begin position="54"/>
        <end position="59"/>
    </location>
</feature>
<feature type="strand" evidence="5">
    <location>
        <begin position="62"/>
        <end position="68"/>
    </location>
</feature>
<feature type="strand" evidence="5">
    <location>
        <begin position="70"/>
        <end position="72"/>
    </location>
</feature>
<feature type="strand" evidence="5">
    <location>
        <begin position="74"/>
        <end position="80"/>
    </location>
</feature>
<feature type="helix" evidence="5">
    <location>
        <begin position="84"/>
        <end position="87"/>
    </location>
</feature>
<feature type="helix" evidence="5">
    <location>
        <begin position="93"/>
        <end position="105"/>
    </location>
</feature>
<feature type="turn" evidence="5">
    <location>
        <begin position="109"/>
        <end position="113"/>
    </location>
</feature>
<feature type="helix" evidence="5">
    <location>
        <begin position="115"/>
        <end position="125"/>
    </location>
</feature>
<feature type="strand" evidence="5">
    <location>
        <begin position="131"/>
        <end position="139"/>
    </location>
</feature>
<feature type="strand" evidence="5">
    <location>
        <begin position="143"/>
        <end position="152"/>
    </location>
</feature>
<feature type="strand" evidence="5">
    <location>
        <begin position="154"/>
        <end position="159"/>
    </location>
</feature>
<feature type="strand" evidence="5">
    <location>
        <begin position="162"/>
        <end position="166"/>
    </location>
</feature>
<feature type="strand" evidence="5">
    <location>
        <begin position="171"/>
        <end position="173"/>
    </location>
</feature>
<feature type="strand" evidence="5">
    <location>
        <begin position="180"/>
        <end position="183"/>
    </location>
</feature>
<feature type="helix" evidence="5">
    <location>
        <begin position="189"/>
        <end position="191"/>
    </location>
</feature>
<feature type="strand" evidence="5">
    <location>
        <begin position="193"/>
        <end position="198"/>
    </location>
</feature>
<feature type="strand" evidence="5">
    <location>
        <begin position="204"/>
        <end position="208"/>
    </location>
</feature>
<feature type="helix" evidence="5">
    <location>
        <begin position="210"/>
        <end position="213"/>
    </location>
</feature>
<feature type="helix" evidence="5">
    <location>
        <begin position="218"/>
        <end position="226"/>
    </location>
</feature>
<feature type="helix" evidence="5">
    <location>
        <begin position="231"/>
        <end position="246"/>
    </location>
</feature>
<feature type="helix" evidence="5">
    <location>
        <begin position="254"/>
        <end position="261"/>
    </location>
</feature>
<feature type="turn" evidence="5">
    <location>
        <begin position="262"/>
        <end position="265"/>
    </location>
</feature>
<feature type="helix" evidence="5">
    <location>
        <begin position="267"/>
        <end position="273"/>
    </location>
</feature>
<feature type="strand" evidence="5">
    <location>
        <begin position="285"/>
        <end position="292"/>
    </location>
</feature>
<name>P2C01_ORYSJ</name>
<dbReference type="EC" id="3.1.3.16"/>
<dbReference type="EMBL" id="AP003209">
    <property type="protein sequence ID" value="BAC00581.1"/>
    <property type="molecule type" value="Genomic_DNA"/>
</dbReference>
<dbReference type="EMBL" id="AP003301">
    <property type="protein sequence ID" value="BAB64790.1"/>
    <property type="molecule type" value="Genomic_DNA"/>
</dbReference>
<dbReference type="EMBL" id="AP008207">
    <property type="protein sequence ID" value="BAF04017.1"/>
    <property type="molecule type" value="Genomic_DNA"/>
</dbReference>
<dbReference type="EMBL" id="AP014957">
    <property type="protein sequence ID" value="BAS70557.1"/>
    <property type="molecule type" value="Genomic_DNA"/>
</dbReference>
<dbReference type="EMBL" id="CM000138">
    <property type="protein sequence ID" value="EAZ10666.1"/>
    <property type="molecule type" value="Genomic_DNA"/>
</dbReference>
<dbReference type="EMBL" id="AK099645">
    <property type="status" value="NOT_ANNOTATED_CDS"/>
    <property type="molecule type" value="mRNA"/>
</dbReference>
<dbReference type="RefSeq" id="XP_015626680.1">
    <property type="nucleotide sequence ID" value="XM_015771194.1"/>
</dbReference>
<dbReference type="PDB" id="6AE9">
    <property type="method" value="X-ray"/>
    <property type="resolution" value="1.47 A"/>
    <property type="chains" value="A/B=44-294"/>
</dbReference>
<dbReference type="PDBsum" id="6AE9"/>
<dbReference type="SMR" id="Q942P9"/>
<dbReference type="FunCoup" id="Q942P9">
    <property type="interactions" value="573"/>
</dbReference>
<dbReference type="STRING" id="39947.Q942P9"/>
<dbReference type="PaxDb" id="39947-Q942P9"/>
<dbReference type="EnsemblPlants" id="Os01t0164600-01">
    <property type="protein sequence ID" value="Os01t0164600-01"/>
    <property type="gene ID" value="Os01g0164600"/>
</dbReference>
<dbReference type="Gramene" id="Os01t0164600-01">
    <property type="protein sequence ID" value="Os01t0164600-01"/>
    <property type="gene ID" value="Os01g0164600"/>
</dbReference>
<dbReference type="KEGG" id="dosa:Os01g0164600"/>
<dbReference type="eggNOG" id="KOG1379">
    <property type="taxonomic scope" value="Eukaryota"/>
</dbReference>
<dbReference type="HOGENOM" id="CLU_029404_3_3_1"/>
<dbReference type="InParanoid" id="Q942P9"/>
<dbReference type="OMA" id="ANTIAWM"/>
<dbReference type="OrthoDB" id="60843at2759"/>
<dbReference type="Proteomes" id="UP000000763">
    <property type="component" value="Chromosome 1"/>
</dbReference>
<dbReference type="Proteomes" id="UP000007752">
    <property type="component" value="Chromosome 1"/>
</dbReference>
<dbReference type="Proteomes" id="UP000059680">
    <property type="component" value="Chromosome 1"/>
</dbReference>
<dbReference type="GO" id="GO:0009507">
    <property type="term" value="C:chloroplast"/>
    <property type="evidence" value="ECO:0000318"/>
    <property type="project" value="GO_Central"/>
</dbReference>
<dbReference type="GO" id="GO:0046872">
    <property type="term" value="F:metal ion binding"/>
    <property type="evidence" value="ECO:0007669"/>
    <property type="project" value="UniProtKB-KW"/>
</dbReference>
<dbReference type="GO" id="GO:0004722">
    <property type="term" value="F:protein serine/threonine phosphatase activity"/>
    <property type="evidence" value="ECO:0000318"/>
    <property type="project" value="GO_Central"/>
</dbReference>
<dbReference type="Gene3D" id="3.60.40.10">
    <property type="entry name" value="PPM-type phosphatase domain"/>
    <property type="match status" value="1"/>
</dbReference>
<dbReference type="InterPro" id="IPR036457">
    <property type="entry name" value="PPM-type-like_dom_sf"/>
</dbReference>
<dbReference type="InterPro" id="IPR001932">
    <property type="entry name" value="PPM-type_phosphatase-like_dom"/>
</dbReference>
<dbReference type="InterPro" id="IPR039123">
    <property type="entry name" value="PPTC7"/>
</dbReference>
<dbReference type="PANTHER" id="PTHR12320">
    <property type="entry name" value="PROTEIN PHOSPHATASE 2C"/>
    <property type="match status" value="1"/>
</dbReference>
<dbReference type="PANTHER" id="PTHR12320:SF60">
    <property type="entry name" value="PROTEIN PHOSPHATASE 2C 26-RELATED"/>
    <property type="match status" value="1"/>
</dbReference>
<dbReference type="SMART" id="SM00331">
    <property type="entry name" value="PP2C_SIG"/>
    <property type="match status" value="1"/>
</dbReference>
<dbReference type="SMART" id="SM00332">
    <property type="entry name" value="PP2Cc"/>
    <property type="match status" value="1"/>
</dbReference>
<dbReference type="SUPFAM" id="SSF81606">
    <property type="entry name" value="PP2C-like"/>
    <property type="match status" value="1"/>
</dbReference>
<dbReference type="PROSITE" id="PS51746">
    <property type="entry name" value="PPM_2"/>
    <property type="match status" value="1"/>
</dbReference>
<protein>
    <recommendedName>
        <fullName>Probable protein phosphatase 2C 1</fullName>
        <shortName>OsPP2C01</shortName>
        <ecNumber>3.1.3.16</ecNumber>
    </recommendedName>
</protein>
<proteinExistence type="evidence at protein level"/>
<comment type="catalytic activity">
    <reaction>
        <text>O-phospho-L-seryl-[protein] + H2O = L-seryl-[protein] + phosphate</text>
        <dbReference type="Rhea" id="RHEA:20629"/>
        <dbReference type="Rhea" id="RHEA-COMP:9863"/>
        <dbReference type="Rhea" id="RHEA-COMP:11604"/>
        <dbReference type="ChEBI" id="CHEBI:15377"/>
        <dbReference type="ChEBI" id="CHEBI:29999"/>
        <dbReference type="ChEBI" id="CHEBI:43474"/>
        <dbReference type="ChEBI" id="CHEBI:83421"/>
        <dbReference type="EC" id="3.1.3.16"/>
    </reaction>
</comment>
<comment type="catalytic activity">
    <reaction>
        <text>O-phospho-L-threonyl-[protein] + H2O = L-threonyl-[protein] + phosphate</text>
        <dbReference type="Rhea" id="RHEA:47004"/>
        <dbReference type="Rhea" id="RHEA-COMP:11060"/>
        <dbReference type="Rhea" id="RHEA-COMP:11605"/>
        <dbReference type="ChEBI" id="CHEBI:15377"/>
        <dbReference type="ChEBI" id="CHEBI:30013"/>
        <dbReference type="ChEBI" id="CHEBI:43474"/>
        <dbReference type="ChEBI" id="CHEBI:61977"/>
        <dbReference type="EC" id="3.1.3.16"/>
    </reaction>
</comment>
<comment type="cofactor">
    <cofactor evidence="1">
        <name>Mg(2+)</name>
        <dbReference type="ChEBI" id="CHEBI:18420"/>
    </cofactor>
    <cofactor evidence="1">
        <name>Mn(2+)</name>
        <dbReference type="ChEBI" id="CHEBI:29035"/>
    </cofactor>
    <text evidence="1">Binds 2 magnesium or manganese ions per subunit.</text>
</comment>
<comment type="similarity">
    <text evidence="4">Belongs to the PP2C family.</text>
</comment>
<comment type="sequence caution" evidence="4">
    <conflict type="frameshift">
        <sequence resource="EMBL" id="AK099645"/>
    </conflict>
</comment>
<gene>
    <name type="ordered locus">Os01g0164600</name>
    <name type="ordered locus">LOC_Os01g07090</name>
    <name type="ORF">B1189A09.48</name>
    <name type="ORF">OsJ_000491</name>
    <name type="ORF">P0701D05.3</name>
</gene>
<accession>Q942P9</accession>
<accession>A0A0P0UYM8</accession>